<name>PYRD_SHEWM</name>
<comment type="function">
    <text evidence="1">Catalyzes the conversion of dihydroorotate to orotate with quinone as electron acceptor.</text>
</comment>
<comment type="catalytic activity">
    <reaction evidence="1">
        <text>(S)-dihydroorotate + a quinone = orotate + a quinol</text>
        <dbReference type="Rhea" id="RHEA:30187"/>
        <dbReference type="ChEBI" id="CHEBI:24646"/>
        <dbReference type="ChEBI" id="CHEBI:30839"/>
        <dbReference type="ChEBI" id="CHEBI:30864"/>
        <dbReference type="ChEBI" id="CHEBI:132124"/>
        <dbReference type="EC" id="1.3.5.2"/>
    </reaction>
</comment>
<comment type="cofactor">
    <cofactor evidence="1">
        <name>FMN</name>
        <dbReference type="ChEBI" id="CHEBI:58210"/>
    </cofactor>
    <text evidence="1">Binds 1 FMN per subunit.</text>
</comment>
<comment type="pathway">
    <text evidence="1">Pyrimidine metabolism; UMP biosynthesis via de novo pathway; orotate from (S)-dihydroorotate (quinone route): step 1/1.</text>
</comment>
<comment type="subunit">
    <text evidence="1">Monomer.</text>
</comment>
<comment type="subcellular location">
    <subcellularLocation>
        <location evidence="1">Cell membrane</location>
        <topology evidence="1">Peripheral membrane protein</topology>
    </subcellularLocation>
</comment>
<comment type="similarity">
    <text evidence="1">Belongs to the dihydroorotate dehydrogenase family. Type 2 subfamily.</text>
</comment>
<proteinExistence type="inferred from homology"/>
<protein>
    <recommendedName>
        <fullName evidence="1">Dihydroorotate dehydrogenase (quinone)</fullName>
        <ecNumber evidence="1">1.3.5.2</ecNumber>
    </recommendedName>
    <alternativeName>
        <fullName evidence="1">DHOdehase</fullName>
        <shortName evidence="1">DHOD</shortName>
        <shortName evidence="1">DHODase</shortName>
    </alternativeName>
    <alternativeName>
        <fullName evidence="1">Dihydroorotate oxidase</fullName>
    </alternativeName>
</protein>
<gene>
    <name evidence="1" type="primary">pyrD</name>
    <name type="ordered locus">Swoo_2141</name>
</gene>
<dbReference type="EC" id="1.3.5.2" evidence="1"/>
<dbReference type="EMBL" id="CP000961">
    <property type="protein sequence ID" value="ACA86425.1"/>
    <property type="molecule type" value="Genomic_DNA"/>
</dbReference>
<dbReference type="RefSeq" id="WP_012324770.1">
    <property type="nucleotide sequence ID" value="NC_010506.1"/>
</dbReference>
<dbReference type="SMR" id="B1KDM8"/>
<dbReference type="STRING" id="392500.Swoo_2141"/>
<dbReference type="KEGG" id="swd:Swoo_2141"/>
<dbReference type="eggNOG" id="COG0167">
    <property type="taxonomic scope" value="Bacteria"/>
</dbReference>
<dbReference type="HOGENOM" id="CLU_013640_2_0_6"/>
<dbReference type="UniPathway" id="UPA00070">
    <property type="reaction ID" value="UER00946"/>
</dbReference>
<dbReference type="Proteomes" id="UP000002168">
    <property type="component" value="Chromosome"/>
</dbReference>
<dbReference type="GO" id="GO:0005737">
    <property type="term" value="C:cytoplasm"/>
    <property type="evidence" value="ECO:0007669"/>
    <property type="project" value="InterPro"/>
</dbReference>
<dbReference type="GO" id="GO:0005886">
    <property type="term" value="C:plasma membrane"/>
    <property type="evidence" value="ECO:0007669"/>
    <property type="project" value="UniProtKB-SubCell"/>
</dbReference>
<dbReference type="GO" id="GO:0106430">
    <property type="term" value="F:dihydroorotate dehydrogenase (quinone) activity"/>
    <property type="evidence" value="ECO:0007669"/>
    <property type="project" value="UniProtKB-EC"/>
</dbReference>
<dbReference type="GO" id="GO:0006207">
    <property type="term" value="P:'de novo' pyrimidine nucleobase biosynthetic process"/>
    <property type="evidence" value="ECO:0007669"/>
    <property type="project" value="InterPro"/>
</dbReference>
<dbReference type="GO" id="GO:0044205">
    <property type="term" value="P:'de novo' UMP biosynthetic process"/>
    <property type="evidence" value="ECO:0007669"/>
    <property type="project" value="UniProtKB-UniRule"/>
</dbReference>
<dbReference type="CDD" id="cd04738">
    <property type="entry name" value="DHOD_2_like"/>
    <property type="match status" value="1"/>
</dbReference>
<dbReference type="FunFam" id="3.20.20.70:FF:000028">
    <property type="entry name" value="Dihydroorotate dehydrogenase (quinone)"/>
    <property type="match status" value="1"/>
</dbReference>
<dbReference type="Gene3D" id="3.20.20.70">
    <property type="entry name" value="Aldolase class I"/>
    <property type="match status" value="1"/>
</dbReference>
<dbReference type="HAMAP" id="MF_00225">
    <property type="entry name" value="DHO_dh_type2"/>
    <property type="match status" value="1"/>
</dbReference>
<dbReference type="InterPro" id="IPR013785">
    <property type="entry name" value="Aldolase_TIM"/>
</dbReference>
<dbReference type="InterPro" id="IPR050074">
    <property type="entry name" value="DHO_dehydrogenase"/>
</dbReference>
<dbReference type="InterPro" id="IPR012135">
    <property type="entry name" value="Dihydroorotate_DH_1_2"/>
</dbReference>
<dbReference type="InterPro" id="IPR005719">
    <property type="entry name" value="Dihydroorotate_DH_2"/>
</dbReference>
<dbReference type="InterPro" id="IPR005720">
    <property type="entry name" value="Dihydroorotate_DH_cat"/>
</dbReference>
<dbReference type="InterPro" id="IPR001295">
    <property type="entry name" value="Dihydroorotate_DH_CS"/>
</dbReference>
<dbReference type="NCBIfam" id="NF003644">
    <property type="entry name" value="PRK05286.1-1"/>
    <property type="match status" value="1"/>
</dbReference>
<dbReference type="NCBIfam" id="NF003645">
    <property type="entry name" value="PRK05286.1-2"/>
    <property type="match status" value="1"/>
</dbReference>
<dbReference type="NCBIfam" id="NF003646">
    <property type="entry name" value="PRK05286.1-4"/>
    <property type="match status" value="1"/>
</dbReference>
<dbReference type="NCBIfam" id="NF003652">
    <property type="entry name" value="PRK05286.2-5"/>
    <property type="match status" value="1"/>
</dbReference>
<dbReference type="NCBIfam" id="TIGR01036">
    <property type="entry name" value="pyrD_sub2"/>
    <property type="match status" value="1"/>
</dbReference>
<dbReference type="PANTHER" id="PTHR48109:SF4">
    <property type="entry name" value="DIHYDROOROTATE DEHYDROGENASE (QUINONE), MITOCHONDRIAL"/>
    <property type="match status" value="1"/>
</dbReference>
<dbReference type="PANTHER" id="PTHR48109">
    <property type="entry name" value="DIHYDROOROTATE DEHYDROGENASE (QUINONE), MITOCHONDRIAL-RELATED"/>
    <property type="match status" value="1"/>
</dbReference>
<dbReference type="Pfam" id="PF01180">
    <property type="entry name" value="DHO_dh"/>
    <property type="match status" value="1"/>
</dbReference>
<dbReference type="PIRSF" id="PIRSF000164">
    <property type="entry name" value="DHO_oxidase"/>
    <property type="match status" value="1"/>
</dbReference>
<dbReference type="SUPFAM" id="SSF51395">
    <property type="entry name" value="FMN-linked oxidoreductases"/>
    <property type="match status" value="1"/>
</dbReference>
<dbReference type="PROSITE" id="PS00911">
    <property type="entry name" value="DHODEHASE_1"/>
    <property type="match status" value="1"/>
</dbReference>
<dbReference type="PROSITE" id="PS00912">
    <property type="entry name" value="DHODEHASE_2"/>
    <property type="match status" value="1"/>
</dbReference>
<keyword id="KW-1003">Cell membrane</keyword>
<keyword id="KW-0285">Flavoprotein</keyword>
<keyword id="KW-0288">FMN</keyword>
<keyword id="KW-0472">Membrane</keyword>
<keyword id="KW-0560">Oxidoreductase</keyword>
<keyword id="KW-0665">Pyrimidine biosynthesis</keyword>
<keyword id="KW-1185">Reference proteome</keyword>
<sequence length="340" mass="36486">MFYKLAQKVMFQMDPEKAHHFALNSLMATANTPLDCFYAQKIAPSPVEFMGVTFPNPVGLAAGMDKDGECIDGFHAMGFGHIEVGTVTPRPQPGNDLPRLFRLKPAKGIINRMGFNNKGVDNLIANLKAAKSGALIGVNIGKNKDTPVEQGKDDYLICMDKVYEYAAYIAVNISSPNTPGLRSLQYGDLLDDLLGSLKAKQKDLAQKHGKYVPIALKIAPDLSDEEIQKIADSLIKNQFDGAIATNTTLSRDGVSGLMNANETGGLSGKPLNLLSTSVIKKLSSCLNGQIPIIGVGGINSAADAIDKLDAGASMVQIYSGFIYQGPKLIKDIIEACRVRK</sequence>
<organism>
    <name type="scientific">Shewanella woodyi (strain ATCC 51908 / MS32)</name>
    <dbReference type="NCBI Taxonomy" id="392500"/>
    <lineage>
        <taxon>Bacteria</taxon>
        <taxon>Pseudomonadati</taxon>
        <taxon>Pseudomonadota</taxon>
        <taxon>Gammaproteobacteria</taxon>
        <taxon>Alteromonadales</taxon>
        <taxon>Shewanellaceae</taxon>
        <taxon>Shewanella</taxon>
    </lineage>
</organism>
<evidence type="ECO:0000255" key="1">
    <source>
        <dbReference type="HAMAP-Rule" id="MF_00225"/>
    </source>
</evidence>
<accession>B1KDM8</accession>
<reference key="1">
    <citation type="submission" date="2008-02" db="EMBL/GenBank/DDBJ databases">
        <title>Complete sequence of Shewanella woodyi ATCC 51908.</title>
        <authorList>
            <consortium name="US DOE Joint Genome Institute"/>
            <person name="Copeland A."/>
            <person name="Lucas S."/>
            <person name="Lapidus A."/>
            <person name="Glavina del Rio T."/>
            <person name="Dalin E."/>
            <person name="Tice H."/>
            <person name="Bruce D."/>
            <person name="Goodwin L."/>
            <person name="Pitluck S."/>
            <person name="Sims D."/>
            <person name="Brettin T."/>
            <person name="Detter J.C."/>
            <person name="Han C."/>
            <person name="Kuske C.R."/>
            <person name="Schmutz J."/>
            <person name="Larimer F."/>
            <person name="Land M."/>
            <person name="Hauser L."/>
            <person name="Kyrpides N."/>
            <person name="Lykidis A."/>
            <person name="Zhao J.-S."/>
            <person name="Richardson P."/>
        </authorList>
    </citation>
    <scope>NUCLEOTIDE SEQUENCE [LARGE SCALE GENOMIC DNA]</scope>
    <source>
        <strain>ATCC 51908 / MS32</strain>
    </source>
</reference>
<feature type="chain" id="PRO_1000100289" description="Dihydroorotate dehydrogenase (quinone)">
    <location>
        <begin position="1"/>
        <end position="340"/>
    </location>
</feature>
<feature type="active site" description="Nucleophile" evidence="1">
    <location>
        <position position="175"/>
    </location>
</feature>
<feature type="binding site" evidence="1">
    <location>
        <begin position="62"/>
        <end position="66"/>
    </location>
    <ligand>
        <name>FMN</name>
        <dbReference type="ChEBI" id="CHEBI:58210"/>
    </ligand>
</feature>
<feature type="binding site" evidence="1">
    <location>
        <position position="66"/>
    </location>
    <ligand>
        <name>substrate</name>
    </ligand>
</feature>
<feature type="binding site" evidence="1">
    <location>
        <position position="86"/>
    </location>
    <ligand>
        <name>FMN</name>
        <dbReference type="ChEBI" id="CHEBI:58210"/>
    </ligand>
</feature>
<feature type="binding site" evidence="1">
    <location>
        <begin position="111"/>
        <end position="115"/>
    </location>
    <ligand>
        <name>substrate</name>
    </ligand>
</feature>
<feature type="binding site" evidence="1">
    <location>
        <position position="139"/>
    </location>
    <ligand>
        <name>FMN</name>
        <dbReference type="ChEBI" id="CHEBI:58210"/>
    </ligand>
</feature>
<feature type="binding site" evidence="1">
    <location>
        <position position="172"/>
    </location>
    <ligand>
        <name>FMN</name>
        <dbReference type="ChEBI" id="CHEBI:58210"/>
    </ligand>
</feature>
<feature type="binding site" evidence="1">
    <location>
        <position position="172"/>
    </location>
    <ligand>
        <name>substrate</name>
    </ligand>
</feature>
<feature type="binding site" evidence="1">
    <location>
        <position position="177"/>
    </location>
    <ligand>
        <name>substrate</name>
    </ligand>
</feature>
<feature type="binding site" evidence="1">
    <location>
        <position position="217"/>
    </location>
    <ligand>
        <name>FMN</name>
        <dbReference type="ChEBI" id="CHEBI:58210"/>
    </ligand>
</feature>
<feature type="binding site" evidence="1">
    <location>
        <position position="245"/>
    </location>
    <ligand>
        <name>FMN</name>
        <dbReference type="ChEBI" id="CHEBI:58210"/>
    </ligand>
</feature>
<feature type="binding site" evidence="1">
    <location>
        <begin position="246"/>
        <end position="247"/>
    </location>
    <ligand>
        <name>substrate</name>
    </ligand>
</feature>
<feature type="binding site" evidence="1">
    <location>
        <position position="268"/>
    </location>
    <ligand>
        <name>FMN</name>
        <dbReference type="ChEBI" id="CHEBI:58210"/>
    </ligand>
</feature>
<feature type="binding site" evidence="1">
    <location>
        <position position="297"/>
    </location>
    <ligand>
        <name>FMN</name>
        <dbReference type="ChEBI" id="CHEBI:58210"/>
    </ligand>
</feature>
<feature type="binding site" evidence="1">
    <location>
        <begin position="318"/>
        <end position="319"/>
    </location>
    <ligand>
        <name>FMN</name>
        <dbReference type="ChEBI" id="CHEBI:58210"/>
    </ligand>
</feature>